<organism>
    <name type="scientific">Nitrosomonas eutropha (strain DSM 101675 / C91 / Nm57)</name>
    <dbReference type="NCBI Taxonomy" id="335283"/>
    <lineage>
        <taxon>Bacteria</taxon>
        <taxon>Pseudomonadati</taxon>
        <taxon>Pseudomonadota</taxon>
        <taxon>Betaproteobacteria</taxon>
        <taxon>Nitrosomonadales</taxon>
        <taxon>Nitrosomonadaceae</taxon>
        <taxon>Nitrosomonas</taxon>
    </lineage>
</organism>
<reference key="1">
    <citation type="journal article" date="2007" name="Environ. Microbiol.">
        <title>Whole-genome analysis of the ammonia-oxidizing bacterium, Nitrosomonas eutropha C91: implications for niche adaptation.</title>
        <authorList>
            <person name="Stein L.Y."/>
            <person name="Arp D.J."/>
            <person name="Berube P.M."/>
            <person name="Chain P.S."/>
            <person name="Hauser L."/>
            <person name="Jetten M.S."/>
            <person name="Klotz M.G."/>
            <person name="Larimer F.W."/>
            <person name="Norton J.M."/>
            <person name="Op den Camp H.J.M."/>
            <person name="Shin M."/>
            <person name="Wei X."/>
        </authorList>
    </citation>
    <scope>NUCLEOTIDE SEQUENCE [LARGE SCALE GENOMIC DNA]</scope>
    <source>
        <strain>DSM 101675 / C91 / Nm57</strain>
    </source>
</reference>
<accession>Q0AIH9</accession>
<sequence length="177" mass="18629">MAKTTRSTGTKTQDEIKADGLKEKMISVNRVTKVVKGGRILGFAALTVVGDGKGGIGMGKGKSREVPLAVQKAMDEARRGMIKINLINGTLHHPIIGRHGAARVYMQPASEGTGIIAGGPMRAIFEVMGVHNILAKCLGSTNPYNIVRATLNGLDKIQTPAMIAAKRGKSIDEITGA</sequence>
<comment type="function">
    <text evidence="1">With S4 and S12 plays an important role in translational accuracy.</text>
</comment>
<comment type="function">
    <text evidence="1">Located at the back of the 30S subunit body where it stabilizes the conformation of the head with respect to the body.</text>
</comment>
<comment type="subunit">
    <text evidence="1">Part of the 30S ribosomal subunit. Contacts proteins S4 and S8.</text>
</comment>
<comment type="domain">
    <text>The N-terminal domain interacts with the head of the 30S subunit; the C-terminal domain interacts with the body and contacts protein S4. The interaction surface between S4 and S5 is involved in control of translational fidelity.</text>
</comment>
<comment type="similarity">
    <text evidence="1">Belongs to the universal ribosomal protein uS5 family.</text>
</comment>
<protein>
    <recommendedName>
        <fullName evidence="1">Small ribosomal subunit protein uS5</fullName>
    </recommendedName>
    <alternativeName>
        <fullName evidence="2">30S ribosomal protein S5</fullName>
    </alternativeName>
</protein>
<proteinExistence type="inferred from homology"/>
<feature type="chain" id="PRO_0000323161" description="Small ribosomal subunit protein uS5">
    <location>
        <begin position="1"/>
        <end position="177"/>
    </location>
</feature>
<feature type="domain" description="S5 DRBM" evidence="1">
    <location>
        <begin position="21"/>
        <end position="84"/>
    </location>
</feature>
<evidence type="ECO:0000255" key="1">
    <source>
        <dbReference type="HAMAP-Rule" id="MF_01307"/>
    </source>
</evidence>
<evidence type="ECO:0000305" key="2"/>
<dbReference type="EMBL" id="CP000450">
    <property type="protein sequence ID" value="ABI58847.1"/>
    <property type="molecule type" value="Genomic_DNA"/>
</dbReference>
<dbReference type="RefSeq" id="WP_011633689.1">
    <property type="nucleotide sequence ID" value="NC_008344.1"/>
</dbReference>
<dbReference type="SMR" id="Q0AIH9"/>
<dbReference type="STRING" id="335283.Neut_0575"/>
<dbReference type="KEGG" id="net:Neut_0575"/>
<dbReference type="eggNOG" id="COG0098">
    <property type="taxonomic scope" value="Bacteria"/>
</dbReference>
<dbReference type="HOGENOM" id="CLU_065898_2_2_4"/>
<dbReference type="Proteomes" id="UP000001966">
    <property type="component" value="Chromosome"/>
</dbReference>
<dbReference type="GO" id="GO:0015935">
    <property type="term" value="C:small ribosomal subunit"/>
    <property type="evidence" value="ECO:0007669"/>
    <property type="project" value="InterPro"/>
</dbReference>
<dbReference type="GO" id="GO:0019843">
    <property type="term" value="F:rRNA binding"/>
    <property type="evidence" value="ECO:0007669"/>
    <property type="project" value="UniProtKB-UniRule"/>
</dbReference>
<dbReference type="GO" id="GO:0003735">
    <property type="term" value="F:structural constituent of ribosome"/>
    <property type="evidence" value="ECO:0007669"/>
    <property type="project" value="InterPro"/>
</dbReference>
<dbReference type="GO" id="GO:0006412">
    <property type="term" value="P:translation"/>
    <property type="evidence" value="ECO:0007669"/>
    <property type="project" value="UniProtKB-UniRule"/>
</dbReference>
<dbReference type="FunFam" id="3.30.160.20:FF:000001">
    <property type="entry name" value="30S ribosomal protein S5"/>
    <property type="match status" value="1"/>
</dbReference>
<dbReference type="FunFam" id="3.30.230.10:FF:000002">
    <property type="entry name" value="30S ribosomal protein S5"/>
    <property type="match status" value="1"/>
</dbReference>
<dbReference type="Gene3D" id="3.30.160.20">
    <property type="match status" value="1"/>
</dbReference>
<dbReference type="Gene3D" id="3.30.230.10">
    <property type="match status" value="1"/>
</dbReference>
<dbReference type="HAMAP" id="MF_01307_B">
    <property type="entry name" value="Ribosomal_uS5_B"/>
    <property type="match status" value="1"/>
</dbReference>
<dbReference type="InterPro" id="IPR020568">
    <property type="entry name" value="Ribosomal_Su5_D2-typ_SF"/>
</dbReference>
<dbReference type="InterPro" id="IPR000851">
    <property type="entry name" value="Ribosomal_uS5"/>
</dbReference>
<dbReference type="InterPro" id="IPR005712">
    <property type="entry name" value="Ribosomal_uS5_bac-type"/>
</dbReference>
<dbReference type="InterPro" id="IPR005324">
    <property type="entry name" value="Ribosomal_uS5_C"/>
</dbReference>
<dbReference type="InterPro" id="IPR013810">
    <property type="entry name" value="Ribosomal_uS5_N"/>
</dbReference>
<dbReference type="InterPro" id="IPR018192">
    <property type="entry name" value="Ribosomal_uS5_N_CS"/>
</dbReference>
<dbReference type="InterPro" id="IPR014721">
    <property type="entry name" value="Ribsml_uS5_D2-typ_fold_subgr"/>
</dbReference>
<dbReference type="NCBIfam" id="TIGR01021">
    <property type="entry name" value="rpsE_bact"/>
    <property type="match status" value="1"/>
</dbReference>
<dbReference type="PANTHER" id="PTHR48277">
    <property type="entry name" value="MITOCHONDRIAL RIBOSOMAL PROTEIN S5"/>
    <property type="match status" value="1"/>
</dbReference>
<dbReference type="PANTHER" id="PTHR48277:SF1">
    <property type="entry name" value="MITOCHONDRIAL RIBOSOMAL PROTEIN S5"/>
    <property type="match status" value="1"/>
</dbReference>
<dbReference type="Pfam" id="PF00333">
    <property type="entry name" value="Ribosomal_S5"/>
    <property type="match status" value="1"/>
</dbReference>
<dbReference type="Pfam" id="PF03719">
    <property type="entry name" value="Ribosomal_S5_C"/>
    <property type="match status" value="1"/>
</dbReference>
<dbReference type="SUPFAM" id="SSF54768">
    <property type="entry name" value="dsRNA-binding domain-like"/>
    <property type="match status" value="1"/>
</dbReference>
<dbReference type="SUPFAM" id="SSF54211">
    <property type="entry name" value="Ribosomal protein S5 domain 2-like"/>
    <property type="match status" value="1"/>
</dbReference>
<dbReference type="PROSITE" id="PS00585">
    <property type="entry name" value="RIBOSOMAL_S5"/>
    <property type="match status" value="1"/>
</dbReference>
<dbReference type="PROSITE" id="PS50881">
    <property type="entry name" value="S5_DSRBD"/>
    <property type="match status" value="1"/>
</dbReference>
<name>RS5_NITEC</name>
<keyword id="KW-0687">Ribonucleoprotein</keyword>
<keyword id="KW-0689">Ribosomal protein</keyword>
<keyword id="KW-0694">RNA-binding</keyword>
<keyword id="KW-0699">rRNA-binding</keyword>
<gene>
    <name evidence="1" type="primary">rpsE</name>
    <name type="ordered locus">Neut_0575</name>
</gene>